<protein>
    <recommendedName>
        <fullName evidence="1">Large ribosomal subunit protein bL17</fullName>
    </recommendedName>
    <alternativeName>
        <fullName evidence="2">50S ribosomal protein L17</fullName>
    </alternativeName>
</protein>
<organism>
    <name type="scientific">Edwardsiella ictaluri (strain 93-146)</name>
    <dbReference type="NCBI Taxonomy" id="634503"/>
    <lineage>
        <taxon>Bacteria</taxon>
        <taxon>Pseudomonadati</taxon>
        <taxon>Pseudomonadota</taxon>
        <taxon>Gammaproteobacteria</taxon>
        <taxon>Enterobacterales</taxon>
        <taxon>Hafniaceae</taxon>
        <taxon>Edwardsiella</taxon>
    </lineage>
</organism>
<gene>
    <name evidence="1" type="primary">rplQ</name>
    <name type="ordered locus">NT01EI_3569</name>
</gene>
<reference key="1">
    <citation type="submission" date="2009-03" db="EMBL/GenBank/DDBJ databases">
        <title>Complete genome sequence of Edwardsiella ictaluri 93-146.</title>
        <authorList>
            <person name="Williams M.L."/>
            <person name="Gillaspy A.F."/>
            <person name="Dyer D.W."/>
            <person name="Thune R.L."/>
            <person name="Waldbieser G.C."/>
            <person name="Schuster S.C."/>
            <person name="Gipson J."/>
            <person name="Zaitshik J."/>
            <person name="Landry C."/>
            <person name="Lawrence M.L."/>
        </authorList>
    </citation>
    <scope>NUCLEOTIDE SEQUENCE [LARGE SCALE GENOMIC DNA]</scope>
    <source>
        <strain>93-146</strain>
    </source>
</reference>
<accession>C5BF26</accession>
<dbReference type="EMBL" id="CP001600">
    <property type="protein sequence ID" value="ACR70698.1"/>
    <property type="molecule type" value="Genomic_DNA"/>
</dbReference>
<dbReference type="RefSeq" id="WP_015872763.1">
    <property type="nucleotide sequence ID" value="NZ_CP169062.1"/>
</dbReference>
<dbReference type="SMR" id="C5BF26"/>
<dbReference type="STRING" id="67780.B6E78_09440"/>
<dbReference type="GeneID" id="69540411"/>
<dbReference type="KEGG" id="eic:NT01EI_3569"/>
<dbReference type="HOGENOM" id="CLU_074407_2_0_6"/>
<dbReference type="OrthoDB" id="9809073at2"/>
<dbReference type="Proteomes" id="UP000001485">
    <property type="component" value="Chromosome"/>
</dbReference>
<dbReference type="GO" id="GO:0022625">
    <property type="term" value="C:cytosolic large ribosomal subunit"/>
    <property type="evidence" value="ECO:0007669"/>
    <property type="project" value="TreeGrafter"/>
</dbReference>
<dbReference type="GO" id="GO:0003735">
    <property type="term" value="F:structural constituent of ribosome"/>
    <property type="evidence" value="ECO:0007669"/>
    <property type="project" value="InterPro"/>
</dbReference>
<dbReference type="GO" id="GO:0006412">
    <property type="term" value="P:translation"/>
    <property type="evidence" value="ECO:0007669"/>
    <property type="project" value="UniProtKB-UniRule"/>
</dbReference>
<dbReference type="FunFam" id="3.90.1030.10:FF:000001">
    <property type="entry name" value="50S ribosomal protein L17"/>
    <property type="match status" value="1"/>
</dbReference>
<dbReference type="Gene3D" id="3.90.1030.10">
    <property type="entry name" value="Ribosomal protein L17"/>
    <property type="match status" value="1"/>
</dbReference>
<dbReference type="HAMAP" id="MF_01368">
    <property type="entry name" value="Ribosomal_bL17"/>
    <property type="match status" value="1"/>
</dbReference>
<dbReference type="InterPro" id="IPR000456">
    <property type="entry name" value="Ribosomal_bL17"/>
</dbReference>
<dbReference type="InterPro" id="IPR047859">
    <property type="entry name" value="Ribosomal_bL17_CS"/>
</dbReference>
<dbReference type="InterPro" id="IPR036373">
    <property type="entry name" value="Ribosomal_bL17_sf"/>
</dbReference>
<dbReference type="NCBIfam" id="TIGR00059">
    <property type="entry name" value="L17"/>
    <property type="match status" value="1"/>
</dbReference>
<dbReference type="PANTHER" id="PTHR14413:SF16">
    <property type="entry name" value="LARGE RIBOSOMAL SUBUNIT PROTEIN BL17M"/>
    <property type="match status" value="1"/>
</dbReference>
<dbReference type="PANTHER" id="PTHR14413">
    <property type="entry name" value="RIBOSOMAL PROTEIN L17"/>
    <property type="match status" value="1"/>
</dbReference>
<dbReference type="Pfam" id="PF01196">
    <property type="entry name" value="Ribosomal_L17"/>
    <property type="match status" value="1"/>
</dbReference>
<dbReference type="SUPFAM" id="SSF64263">
    <property type="entry name" value="Prokaryotic ribosomal protein L17"/>
    <property type="match status" value="1"/>
</dbReference>
<dbReference type="PROSITE" id="PS01167">
    <property type="entry name" value="RIBOSOMAL_L17"/>
    <property type="match status" value="1"/>
</dbReference>
<feature type="chain" id="PRO_1000215005" description="Large ribosomal subunit protein bL17">
    <location>
        <begin position="1"/>
        <end position="128"/>
    </location>
</feature>
<comment type="subunit">
    <text evidence="1">Part of the 50S ribosomal subunit. Contacts protein L32.</text>
</comment>
<comment type="similarity">
    <text evidence="1">Belongs to the bacterial ribosomal protein bL17 family.</text>
</comment>
<evidence type="ECO:0000255" key="1">
    <source>
        <dbReference type="HAMAP-Rule" id="MF_01368"/>
    </source>
</evidence>
<evidence type="ECO:0000305" key="2"/>
<proteinExistence type="inferred from homology"/>
<name>RL17_EDWI9</name>
<keyword id="KW-0687">Ribonucleoprotein</keyword>
<keyword id="KW-0689">Ribosomal protein</keyword>
<sequence>MRHRKSGRQLNRNSSHRQAMFRNMAGSLVRHEIIKTTLPKAKELRRVVEPLITLAKTDSVANRRLAFARTRDNEIVAKLFNELGPRFASRAGGYTRILKCGFRAGDNAPMAYIELVDRSASEAEAAAE</sequence>